<name>SCC4_XENLA</name>
<gene>
    <name type="primary">mau2</name>
</gene>
<sequence length="607" mass="68866">MSVMAATAVVSPQAEASESWYLALLGFAEHFRTSSPPKIRLCVHCLQAVFQFKPPQRIEARTHLQLGSVLYHHTKNSELARQHLEKAWFISQQIPQFEDVKFEAASLLSELYCQENSVDAAKPLLRKAIQISQQTPYWHCRLLFQLAQLHTLEKDLVSACDLLGVGAEYARVVGSEYTRALFLLSKGMLLLMERKLQEVHPLLTLCGQIVENWQGNPIQKESLRVFFLVLQVTHYLDAGQVKSVKPCLKQLQQCIQTISTLHDDEILPSNPADLFHWLPKEHMCVLVYLVTVMHSMQAGYLEKAQKYTDKALMQLEKLKMLDSSPILSSFQVILLEHIIMCRLVTGHKATALQEISQLCQLCQQSPRLFSNHAAQLHTLLGLYCISVNCMDNAEAQFTTALRLTTHQELWTFIVTNLASVYIREGNRHQELYALLERINPDHNFPVSSHCLRAAAFYIRGLFSFFQGRYNEAKRFLRETLKMSNAEDLNRLTACSLVLLGHIFYVLGNHRESNNMVVPAMQLASKIPDMSVQLWSSALLRDLNKACGNNIDAHEAAQMHQNFSQQLLQDHIEACSLPEHNLITWTDGSPPVQFQAQNGPTTSLASLL</sequence>
<keyword id="KW-0131">Cell cycle</keyword>
<keyword id="KW-0132">Cell division</keyword>
<keyword id="KW-0159">Chromosome partition</keyword>
<keyword id="KW-0498">Mitosis</keyword>
<keyword id="KW-0539">Nucleus</keyword>
<keyword id="KW-1185">Reference proteome</keyword>
<keyword id="KW-0677">Repeat</keyword>
<keyword id="KW-0802">TPR repeat</keyword>
<accession>B4ZIX8</accession>
<feature type="chain" id="PRO_0000382724" description="MAU2 chromatid cohesion factor homolog">
    <location>
        <begin position="1"/>
        <end position="607"/>
    </location>
</feature>
<feature type="repeat" description="TPR 1">
    <location>
        <begin position="102"/>
        <end position="135"/>
    </location>
</feature>
<feature type="repeat" description="TPR 2">
    <location>
        <begin position="374"/>
        <end position="407"/>
    </location>
</feature>
<feature type="repeat" description="TPR 3">
    <location>
        <begin position="453"/>
        <end position="486"/>
    </location>
</feature>
<feature type="repeat" description="TPR 4">
    <location>
        <begin position="493"/>
        <end position="526"/>
    </location>
</feature>
<reference key="1">
    <citation type="journal article" date="2008" name="Genes Dev.">
        <title>Cdc7-Drf1 kinase links chromosome cohesion to the initiation of DNA replication in Xenopus egg extracts.</title>
        <authorList>
            <person name="Takahashi T.S."/>
            <person name="Basu A."/>
            <person name="Bermudez V."/>
            <person name="Hurwitz J."/>
            <person name="Walter J.C."/>
        </authorList>
    </citation>
    <scope>NUCLEOTIDE SEQUENCE [MRNA]</scope>
</reference>
<reference key="2">
    <citation type="journal article" date="2006" name="Curr. Biol.">
        <title>Human Scc4 is required for cohesin binding to chromatin, sister-chromatid cohesion, and mitotic progression.</title>
        <authorList>
            <person name="Watrin E."/>
            <person name="Schleiffer A."/>
            <person name="Tanaka K."/>
            <person name="Eisenhaber F."/>
            <person name="Nasmyth K."/>
            <person name="Peters J.M."/>
        </authorList>
    </citation>
    <scope>SUBUNIT</scope>
</reference>
<protein>
    <recommendedName>
        <fullName>MAU2 chromatid cohesion factor homolog</fullName>
        <shortName>MAU-2</shortName>
    </recommendedName>
    <alternativeName>
        <fullName>Cohesin loading complex subunit SCC4 homolog</fullName>
    </alternativeName>
</protein>
<proteinExistence type="evidence at protein level"/>
<organism>
    <name type="scientific">Xenopus laevis</name>
    <name type="common">African clawed frog</name>
    <dbReference type="NCBI Taxonomy" id="8355"/>
    <lineage>
        <taxon>Eukaryota</taxon>
        <taxon>Metazoa</taxon>
        <taxon>Chordata</taxon>
        <taxon>Craniata</taxon>
        <taxon>Vertebrata</taxon>
        <taxon>Euteleostomi</taxon>
        <taxon>Amphibia</taxon>
        <taxon>Batrachia</taxon>
        <taxon>Anura</taxon>
        <taxon>Pipoidea</taxon>
        <taxon>Pipidae</taxon>
        <taxon>Xenopodinae</taxon>
        <taxon>Xenopus</taxon>
        <taxon>Xenopus</taxon>
    </lineage>
</organism>
<comment type="function">
    <text evidence="1">Plays an important role in the loading of the cohesin complex on to DNA. Plays a role in sister chromatid cohesion and normal progression through prometaphase.</text>
</comment>
<comment type="subunit">
    <text evidence="2">Interacts with one or more paralogs of nipbl to form the cohesin loading complex.</text>
</comment>
<comment type="subcellular location">
    <subcellularLocation>
        <location evidence="1">Nucleus</location>
        <location evidence="1">Nucleoplasm</location>
    </subcellularLocation>
    <text evidence="1">Binds to chromatin from the end of mitosis until prophase.</text>
</comment>
<comment type="similarity">
    <text evidence="3">Belongs to the SCC4/mau-2 family.</text>
</comment>
<dbReference type="EMBL" id="EU747648">
    <property type="protein sequence ID" value="ACF40224.1"/>
    <property type="molecule type" value="mRNA"/>
</dbReference>
<dbReference type="RefSeq" id="NP_001124425.1">
    <property type="nucleotide sequence ID" value="NM_001130953.1"/>
</dbReference>
<dbReference type="GeneID" id="100174813"/>
<dbReference type="KEGG" id="xla:100174813"/>
<dbReference type="AGR" id="Xenbase:XB-GENE-5991498"/>
<dbReference type="CTD" id="100174813"/>
<dbReference type="Xenbase" id="XB-GENE-5991498">
    <property type="gene designation" value="mau2.S"/>
</dbReference>
<dbReference type="OrthoDB" id="5565328at2759"/>
<dbReference type="Proteomes" id="UP000186698">
    <property type="component" value="Chromosome 1S"/>
</dbReference>
<dbReference type="Bgee" id="100174813">
    <property type="expression patterns" value="Expressed in blastula and 19 other cell types or tissues"/>
</dbReference>
<dbReference type="GO" id="GO:0000785">
    <property type="term" value="C:chromatin"/>
    <property type="evidence" value="ECO:0000250"/>
    <property type="project" value="UniProtKB"/>
</dbReference>
<dbReference type="GO" id="GO:0005654">
    <property type="term" value="C:nucleoplasm"/>
    <property type="evidence" value="ECO:0000250"/>
    <property type="project" value="UniProtKB"/>
</dbReference>
<dbReference type="GO" id="GO:0005634">
    <property type="term" value="C:nucleus"/>
    <property type="evidence" value="ECO:0000250"/>
    <property type="project" value="UniProtKB"/>
</dbReference>
<dbReference type="GO" id="GO:0090694">
    <property type="term" value="C:Scc2-Scc4 cohesin loading complex"/>
    <property type="evidence" value="ECO:0000250"/>
    <property type="project" value="UniProtKB"/>
</dbReference>
<dbReference type="GO" id="GO:0032116">
    <property type="term" value="C:SMC loading complex"/>
    <property type="evidence" value="ECO:0000250"/>
    <property type="project" value="UniProtKB"/>
</dbReference>
<dbReference type="GO" id="GO:0051301">
    <property type="term" value="P:cell division"/>
    <property type="evidence" value="ECO:0007669"/>
    <property type="project" value="UniProtKB-KW"/>
</dbReference>
<dbReference type="GO" id="GO:0007059">
    <property type="term" value="P:chromosome segregation"/>
    <property type="evidence" value="ECO:0007669"/>
    <property type="project" value="UniProtKB-KW"/>
</dbReference>
<dbReference type="GO" id="GO:0034088">
    <property type="term" value="P:maintenance of mitotic sister chromatid cohesion"/>
    <property type="evidence" value="ECO:0000250"/>
    <property type="project" value="UniProtKB"/>
</dbReference>
<dbReference type="GO" id="GO:0007064">
    <property type="term" value="P:mitotic sister chromatid cohesion"/>
    <property type="evidence" value="ECO:0000250"/>
    <property type="project" value="UniProtKB"/>
</dbReference>
<dbReference type="FunFam" id="1.25.40.10:FF:000216">
    <property type="entry name" value="MAU2 chromatid cohesion factor homolog"/>
    <property type="match status" value="1"/>
</dbReference>
<dbReference type="Gene3D" id="1.25.40.10">
    <property type="entry name" value="Tetratricopeptide repeat domain"/>
    <property type="match status" value="2"/>
</dbReference>
<dbReference type="InterPro" id="IPR019440">
    <property type="entry name" value="MAU2"/>
</dbReference>
<dbReference type="InterPro" id="IPR011990">
    <property type="entry name" value="TPR-like_helical_dom_sf"/>
</dbReference>
<dbReference type="PANTHER" id="PTHR21394">
    <property type="entry name" value="MAU2 CHROMATID COHESION FACTOR HOMOLOG"/>
    <property type="match status" value="1"/>
</dbReference>
<dbReference type="Pfam" id="PF10345">
    <property type="entry name" value="Cohesin_load"/>
    <property type="match status" value="1"/>
</dbReference>
<dbReference type="SUPFAM" id="SSF48452">
    <property type="entry name" value="TPR-like"/>
    <property type="match status" value="2"/>
</dbReference>
<evidence type="ECO:0000250" key="1">
    <source>
        <dbReference type="UniProtKB" id="Q9Y6X3"/>
    </source>
</evidence>
<evidence type="ECO:0000269" key="2">
    <source>
    </source>
</evidence>
<evidence type="ECO:0000305" key="3"/>